<comment type="function">
    <text evidence="1">Participates actively in the response to hyperosmotic and heat shock by preventing the aggregation of stress-denatured proteins and by disaggregating proteins, also in an autonomous, DnaK-independent fashion. Unfolded proteins bind initially to DnaJ; upon interaction with the DnaJ-bound protein, DnaK hydrolyzes its bound ATP, resulting in the formation of a stable complex. GrpE releases ADP from DnaK; ATP binding to DnaK triggers the release of the substrate protein, thus completing the reaction cycle. Several rounds of ATP-dependent interactions between DnaJ, DnaK and GrpE are required for fully efficient folding. Also involved, together with DnaK and GrpE, in the DNA replication of plasmids through activation of initiation proteins.</text>
</comment>
<comment type="cofactor">
    <cofactor evidence="1">
        <name>Zn(2+)</name>
        <dbReference type="ChEBI" id="CHEBI:29105"/>
    </cofactor>
    <text evidence="1">Binds 2 Zn(2+) ions per monomer.</text>
</comment>
<comment type="subunit">
    <text evidence="1">Homodimer.</text>
</comment>
<comment type="subcellular location">
    <subcellularLocation>
        <location evidence="1">Cytoplasm</location>
    </subcellularLocation>
</comment>
<comment type="domain">
    <text evidence="1">The J domain is necessary and sufficient to stimulate DnaK ATPase activity. Zinc center 1 plays an important role in the autonomous, DnaK-independent chaperone activity of DnaJ. Zinc center 2 is essential for interaction with DnaK and for DnaJ activity.</text>
</comment>
<comment type="similarity">
    <text evidence="1">Belongs to the DnaJ family.</text>
</comment>
<dbReference type="EMBL" id="Y09633">
    <property type="protein sequence ID" value="CAA70848.1"/>
    <property type="molecule type" value="Genomic_DNA"/>
</dbReference>
<dbReference type="EMBL" id="BA000040">
    <property type="protein sequence ID" value="BAC45945.1"/>
    <property type="molecule type" value="Genomic_DNA"/>
</dbReference>
<dbReference type="RefSeq" id="NP_767320.1">
    <property type="nucleotide sequence ID" value="NC_004463.1"/>
</dbReference>
<dbReference type="RefSeq" id="WP_011083507.1">
    <property type="nucleotide sequence ID" value="NC_004463.1"/>
</dbReference>
<dbReference type="SMR" id="P94319"/>
<dbReference type="FunCoup" id="P94319">
    <property type="interactions" value="823"/>
</dbReference>
<dbReference type="STRING" id="224911.AAV28_00235"/>
<dbReference type="EnsemblBacteria" id="BAC45945">
    <property type="protein sequence ID" value="BAC45945"/>
    <property type="gene ID" value="BAC45945"/>
</dbReference>
<dbReference type="GeneID" id="46487953"/>
<dbReference type="KEGG" id="bja:blr0680"/>
<dbReference type="PATRIC" id="fig|224911.44.peg.50"/>
<dbReference type="eggNOG" id="COG0484">
    <property type="taxonomic scope" value="Bacteria"/>
</dbReference>
<dbReference type="HOGENOM" id="CLU_017633_0_7_5"/>
<dbReference type="InParanoid" id="P94319"/>
<dbReference type="OrthoDB" id="9779889at2"/>
<dbReference type="PhylomeDB" id="P94319"/>
<dbReference type="Proteomes" id="UP000002526">
    <property type="component" value="Chromosome"/>
</dbReference>
<dbReference type="GO" id="GO:0005737">
    <property type="term" value="C:cytoplasm"/>
    <property type="evidence" value="ECO:0000318"/>
    <property type="project" value="GO_Central"/>
</dbReference>
<dbReference type="GO" id="GO:0005524">
    <property type="term" value="F:ATP binding"/>
    <property type="evidence" value="ECO:0007669"/>
    <property type="project" value="InterPro"/>
</dbReference>
<dbReference type="GO" id="GO:0031072">
    <property type="term" value="F:heat shock protein binding"/>
    <property type="evidence" value="ECO:0007669"/>
    <property type="project" value="InterPro"/>
</dbReference>
<dbReference type="GO" id="GO:0051082">
    <property type="term" value="F:unfolded protein binding"/>
    <property type="evidence" value="ECO:0000318"/>
    <property type="project" value="GO_Central"/>
</dbReference>
<dbReference type="GO" id="GO:0008270">
    <property type="term" value="F:zinc ion binding"/>
    <property type="evidence" value="ECO:0007669"/>
    <property type="project" value="UniProtKB-UniRule"/>
</dbReference>
<dbReference type="GO" id="GO:0051085">
    <property type="term" value="P:chaperone cofactor-dependent protein refolding"/>
    <property type="evidence" value="ECO:0000318"/>
    <property type="project" value="GO_Central"/>
</dbReference>
<dbReference type="GO" id="GO:0006260">
    <property type="term" value="P:DNA replication"/>
    <property type="evidence" value="ECO:0007669"/>
    <property type="project" value="UniProtKB-KW"/>
</dbReference>
<dbReference type="GO" id="GO:0042026">
    <property type="term" value="P:protein refolding"/>
    <property type="evidence" value="ECO:0000318"/>
    <property type="project" value="GO_Central"/>
</dbReference>
<dbReference type="GO" id="GO:0009408">
    <property type="term" value="P:response to heat"/>
    <property type="evidence" value="ECO:0007669"/>
    <property type="project" value="InterPro"/>
</dbReference>
<dbReference type="CDD" id="cd06257">
    <property type="entry name" value="DnaJ"/>
    <property type="match status" value="1"/>
</dbReference>
<dbReference type="CDD" id="cd10747">
    <property type="entry name" value="DnaJ_C"/>
    <property type="match status" value="1"/>
</dbReference>
<dbReference type="CDD" id="cd10719">
    <property type="entry name" value="DnaJ_zf"/>
    <property type="match status" value="1"/>
</dbReference>
<dbReference type="FunFam" id="1.10.287.110:FF:000034">
    <property type="entry name" value="Chaperone protein DnaJ"/>
    <property type="match status" value="1"/>
</dbReference>
<dbReference type="FunFam" id="2.10.230.10:FF:000002">
    <property type="entry name" value="Molecular chaperone DnaJ"/>
    <property type="match status" value="1"/>
</dbReference>
<dbReference type="FunFam" id="2.60.260.20:FF:000004">
    <property type="entry name" value="Molecular chaperone DnaJ"/>
    <property type="match status" value="1"/>
</dbReference>
<dbReference type="Gene3D" id="1.10.287.110">
    <property type="entry name" value="DnaJ domain"/>
    <property type="match status" value="1"/>
</dbReference>
<dbReference type="Gene3D" id="2.10.230.10">
    <property type="entry name" value="Heat shock protein DnaJ, cysteine-rich domain"/>
    <property type="match status" value="1"/>
</dbReference>
<dbReference type="Gene3D" id="2.60.260.20">
    <property type="entry name" value="Urease metallochaperone UreE, N-terminal domain"/>
    <property type="match status" value="2"/>
</dbReference>
<dbReference type="HAMAP" id="MF_01152">
    <property type="entry name" value="DnaJ"/>
    <property type="match status" value="1"/>
</dbReference>
<dbReference type="InterPro" id="IPR012724">
    <property type="entry name" value="DnaJ"/>
</dbReference>
<dbReference type="InterPro" id="IPR002939">
    <property type="entry name" value="DnaJ_C"/>
</dbReference>
<dbReference type="InterPro" id="IPR001623">
    <property type="entry name" value="DnaJ_domain"/>
</dbReference>
<dbReference type="InterPro" id="IPR018253">
    <property type="entry name" value="DnaJ_domain_CS"/>
</dbReference>
<dbReference type="InterPro" id="IPR008971">
    <property type="entry name" value="HSP40/DnaJ_pept-bd"/>
</dbReference>
<dbReference type="InterPro" id="IPR001305">
    <property type="entry name" value="HSP_DnaJ_Cys-rich_dom"/>
</dbReference>
<dbReference type="InterPro" id="IPR036410">
    <property type="entry name" value="HSP_DnaJ_Cys-rich_dom_sf"/>
</dbReference>
<dbReference type="InterPro" id="IPR036869">
    <property type="entry name" value="J_dom_sf"/>
</dbReference>
<dbReference type="NCBIfam" id="TIGR02349">
    <property type="entry name" value="DnaJ_bact"/>
    <property type="match status" value="1"/>
</dbReference>
<dbReference type="NCBIfam" id="NF008035">
    <property type="entry name" value="PRK10767.1"/>
    <property type="match status" value="1"/>
</dbReference>
<dbReference type="PANTHER" id="PTHR43096:SF48">
    <property type="entry name" value="CHAPERONE PROTEIN DNAJ"/>
    <property type="match status" value="1"/>
</dbReference>
<dbReference type="PANTHER" id="PTHR43096">
    <property type="entry name" value="DNAJ HOMOLOG 1, MITOCHONDRIAL-RELATED"/>
    <property type="match status" value="1"/>
</dbReference>
<dbReference type="Pfam" id="PF00226">
    <property type="entry name" value="DnaJ"/>
    <property type="match status" value="1"/>
</dbReference>
<dbReference type="Pfam" id="PF01556">
    <property type="entry name" value="DnaJ_C"/>
    <property type="match status" value="1"/>
</dbReference>
<dbReference type="Pfam" id="PF00684">
    <property type="entry name" value="DnaJ_CXXCXGXG"/>
    <property type="match status" value="1"/>
</dbReference>
<dbReference type="PRINTS" id="PR00625">
    <property type="entry name" value="JDOMAIN"/>
</dbReference>
<dbReference type="SMART" id="SM00271">
    <property type="entry name" value="DnaJ"/>
    <property type="match status" value="1"/>
</dbReference>
<dbReference type="SUPFAM" id="SSF46565">
    <property type="entry name" value="Chaperone J-domain"/>
    <property type="match status" value="1"/>
</dbReference>
<dbReference type="SUPFAM" id="SSF57938">
    <property type="entry name" value="DnaJ/Hsp40 cysteine-rich domain"/>
    <property type="match status" value="1"/>
</dbReference>
<dbReference type="SUPFAM" id="SSF49493">
    <property type="entry name" value="HSP40/DnaJ peptide-binding domain"/>
    <property type="match status" value="2"/>
</dbReference>
<dbReference type="PROSITE" id="PS00636">
    <property type="entry name" value="DNAJ_1"/>
    <property type="match status" value="1"/>
</dbReference>
<dbReference type="PROSITE" id="PS50076">
    <property type="entry name" value="DNAJ_2"/>
    <property type="match status" value="1"/>
</dbReference>
<dbReference type="PROSITE" id="PS51188">
    <property type="entry name" value="ZF_CR"/>
    <property type="match status" value="1"/>
</dbReference>
<evidence type="ECO:0000255" key="1">
    <source>
        <dbReference type="HAMAP-Rule" id="MF_01152"/>
    </source>
</evidence>
<proteinExistence type="inferred from homology"/>
<protein>
    <recommendedName>
        <fullName evidence="1">Chaperone protein DnaJ</fullName>
    </recommendedName>
</protein>
<keyword id="KW-0143">Chaperone</keyword>
<keyword id="KW-0963">Cytoplasm</keyword>
<keyword id="KW-0235">DNA replication</keyword>
<keyword id="KW-0479">Metal-binding</keyword>
<keyword id="KW-1185">Reference proteome</keyword>
<keyword id="KW-0677">Repeat</keyword>
<keyword id="KW-0346">Stress response</keyword>
<keyword id="KW-0862">Zinc</keyword>
<keyword id="KW-0863">Zinc-finger</keyword>
<feature type="chain" id="PRO_0000070740" description="Chaperone protein DnaJ">
    <location>
        <begin position="1"/>
        <end position="377"/>
    </location>
</feature>
<feature type="domain" description="J" evidence="1">
    <location>
        <begin position="8"/>
        <end position="73"/>
    </location>
</feature>
<feature type="repeat" description="CXXCXGXG motif">
    <location>
        <begin position="148"/>
        <end position="155"/>
    </location>
</feature>
<feature type="repeat" description="CXXCXGXG motif">
    <location>
        <begin position="165"/>
        <end position="172"/>
    </location>
</feature>
<feature type="repeat" description="CXXCXGXG motif">
    <location>
        <begin position="187"/>
        <end position="194"/>
    </location>
</feature>
<feature type="repeat" description="CXXCXGXG motif">
    <location>
        <begin position="201"/>
        <end position="208"/>
    </location>
</feature>
<feature type="zinc finger region" description="CR-type" evidence="1">
    <location>
        <begin position="135"/>
        <end position="213"/>
    </location>
</feature>
<feature type="binding site" evidence="1">
    <location>
        <position position="148"/>
    </location>
    <ligand>
        <name>Zn(2+)</name>
        <dbReference type="ChEBI" id="CHEBI:29105"/>
        <label>1</label>
    </ligand>
</feature>
<feature type="binding site" evidence="1">
    <location>
        <position position="151"/>
    </location>
    <ligand>
        <name>Zn(2+)</name>
        <dbReference type="ChEBI" id="CHEBI:29105"/>
        <label>1</label>
    </ligand>
</feature>
<feature type="binding site" evidence="1">
    <location>
        <position position="165"/>
    </location>
    <ligand>
        <name>Zn(2+)</name>
        <dbReference type="ChEBI" id="CHEBI:29105"/>
        <label>2</label>
    </ligand>
</feature>
<feature type="binding site" evidence="1">
    <location>
        <position position="168"/>
    </location>
    <ligand>
        <name>Zn(2+)</name>
        <dbReference type="ChEBI" id="CHEBI:29105"/>
        <label>2</label>
    </ligand>
</feature>
<feature type="binding site" evidence="1">
    <location>
        <position position="187"/>
    </location>
    <ligand>
        <name>Zn(2+)</name>
        <dbReference type="ChEBI" id="CHEBI:29105"/>
        <label>2</label>
    </ligand>
</feature>
<feature type="binding site" evidence="1">
    <location>
        <position position="190"/>
    </location>
    <ligand>
        <name>Zn(2+)</name>
        <dbReference type="ChEBI" id="CHEBI:29105"/>
        <label>2</label>
    </ligand>
</feature>
<feature type="binding site" evidence="1">
    <location>
        <position position="201"/>
    </location>
    <ligand>
        <name>Zn(2+)</name>
        <dbReference type="ChEBI" id="CHEBI:29105"/>
        <label>1</label>
    </ligand>
</feature>
<feature type="binding site" evidence="1">
    <location>
        <position position="204"/>
    </location>
    <ligand>
        <name>Zn(2+)</name>
        <dbReference type="ChEBI" id="CHEBI:29105"/>
        <label>1</label>
    </ligand>
</feature>
<accession>P94319</accession>
<organism>
    <name type="scientific">Bradyrhizobium diazoefficiens (strain JCM 10833 / BCRC 13528 / IAM 13628 / NBRC 14792 / USDA 110)</name>
    <dbReference type="NCBI Taxonomy" id="224911"/>
    <lineage>
        <taxon>Bacteria</taxon>
        <taxon>Pseudomonadati</taxon>
        <taxon>Pseudomonadota</taxon>
        <taxon>Alphaproteobacteria</taxon>
        <taxon>Hyphomicrobiales</taxon>
        <taxon>Nitrobacteraceae</taxon>
        <taxon>Bradyrhizobium</taxon>
    </lineage>
</organism>
<name>DNAJ_BRADU</name>
<gene>
    <name evidence="1" type="primary">dnaJ</name>
    <name type="ordered locus">blr0680</name>
</gene>
<sequence length="377" mass="40945">MSTSTKRCYYETLEVERDADESKLKSSFRKLAMKFHPDRNPGDDTSEVKFKEINEAYEVLKDKDKRAAYDRFGHAAFEQGGPGGGAGFGAGFASSFSDIFEDLFGMAGQRGRGGRERGADLRYNMEITLEEAFGGKTAQIEIPVSVTCEACSGIGAKAGTKPKTCSTCGGAGRVRQSQGFFTLERTCPGCQGRGQMIEDACPSCSGQGRVTRERTLSVNIPQGVEDGTRIRLAGEGEAGVRGGPPGDLYIFLSLAQHQFFQRDGADLHCRVPISMVTAALGGEFEVPTIEKGKAKVKVPAGTQSNRRFRIASKGMPVLRSRQTGDMYVQVVVETPQNLTKKQQELLAEFEKLSSGNTQPESEGFFTKVKDFFGSRAN</sequence>
<reference key="1">
    <citation type="journal article" date="1997" name="Mol. Gen. Genet.">
        <title>The dnaKJ operon belongs to the sigma32-dependent class of heat shock genes in Bradyrhizobium japonicum.</title>
        <authorList>
            <person name="Minder A.C."/>
            <person name="Narberhaus F."/>
            <person name="Babst M."/>
            <person name="Hennecke H."/>
            <person name="Fischer H.-M."/>
        </authorList>
    </citation>
    <scope>NUCLEOTIDE SEQUENCE [GENOMIC DNA]</scope>
    <source>
        <strain>USDA 110spc4</strain>
    </source>
</reference>
<reference key="2">
    <citation type="journal article" date="2002" name="DNA Res.">
        <title>Complete genomic sequence of nitrogen-fixing symbiotic bacterium Bradyrhizobium japonicum USDA110.</title>
        <authorList>
            <person name="Kaneko T."/>
            <person name="Nakamura Y."/>
            <person name="Sato S."/>
            <person name="Minamisawa K."/>
            <person name="Uchiumi T."/>
            <person name="Sasamoto S."/>
            <person name="Watanabe A."/>
            <person name="Idesawa K."/>
            <person name="Iriguchi M."/>
            <person name="Kawashima K."/>
            <person name="Kohara M."/>
            <person name="Matsumoto M."/>
            <person name="Shimpo S."/>
            <person name="Tsuruoka H."/>
            <person name="Wada T."/>
            <person name="Yamada M."/>
            <person name="Tabata S."/>
        </authorList>
    </citation>
    <scope>NUCLEOTIDE SEQUENCE [LARGE SCALE GENOMIC DNA]</scope>
    <source>
        <strain>JCM 10833 / BCRC 13528 / IAM 13628 / NBRC 14792 / USDA 110</strain>
    </source>
</reference>